<feature type="chain" id="PRO_0000429572" description="Ribonuclease J">
    <location>
        <begin position="1"/>
        <end position="564"/>
    </location>
</feature>
<feature type="binding site" evidence="1">
    <location>
        <position position="85"/>
    </location>
    <ligand>
        <name>Zn(2+)</name>
        <dbReference type="ChEBI" id="CHEBI:29105"/>
        <label>1</label>
        <note>catalytic</note>
    </ligand>
</feature>
<feature type="binding site" evidence="1">
    <location>
        <position position="87"/>
    </location>
    <ligand>
        <name>Zn(2+)</name>
        <dbReference type="ChEBI" id="CHEBI:29105"/>
        <label>1</label>
        <note>catalytic</note>
    </ligand>
</feature>
<feature type="binding site" evidence="1">
    <location>
        <position position="89"/>
    </location>
    <ligand>
        <name>Zn(2+)</name>
        <dbReference type="ChEBI" id="CHEBI:29105"/>
        <label>2</label>
        <note>catalytic</note>
    </ligand>
</feature>
<feature type="binding site" evidence="1">
    <location>
        <position position="90"/>
    </location>
    <ligand>
        <name>Zn(2+)</name>
        <dbReference type="ChEBI" id="CHEBI:29105"/>
        <label>2</label>
        <note>catalytic</note>
    </ligand>
</feature>
<feature type="binding site" evidence="1">
    <location>
        <position position="153"/>
    </location>
    <ligand>
        <name>Zn(2+)</name>
        <dbReference type="ChEBI" id="CHEBI:29105"/>
        <label>1</label>
        <note>catalytic</note>
    </ligand>
</feature>
<feature type="binding site" evidence="1">
    <location>
        <position position="175"/>
    </location>
    <ligand>
        <name>Zn(2+)</name>
        <dbReference type="ChEBI" id="CHEBI:29105"/>
        <label>1</label>
        <note>catalytic</note>
    </ligand>
</feature>
<feature type="binding site" evidence="1">
    <location>
        <position position="175"/>
    </location>
    <ligand>
        <name>Zn(2+)</name>
        <dbReference type="ChEBI" id="CHEBI:29105"/>
        <label>2</label>
        <note>catalytic</note>
    </ligand>
</feature>
<feature type="binding site" evidence="1">
    <location>
        <begin position="375"/>
        <end position="379"/>
    </location>
    <ligand>
        <name>substrate</name>
    </ligand>
</feature>
<feature type="binding site" evidence="1">
    <location>
        <position position="401"/>
    </location>
    <ligand>
        <name>Zn(2+)</name>
        <dbReference type="ChEBI" id="CHEBI:29105"/>
        <label>2</label>
        <note>catalytic</note>
    </ligand>
</feature>
<comment type="function">
    <text evidence="2">An RNase that has 5'-3' exonuclease and possibly endonuclease activity. Plays a role in 16S and 23S rRNA processing. Might have a role in mRNA maturation and/or decay.</text>
</comment>
<comment type="cofactor">
    <cofactor evidence="1">
        <name>Zn(2+)</name>
        <dbReference type="ChEBI" id="CHEBI:29105"/>
    </cofactor>
    <text evidence="1">Binds up to 2 Zn(2+) ions per subunit. It is not clear if Zn(2+) or Mg(2+) is physiologically important.</text>
</comment>
<comment type="subunit">
    <text evidence="1">Homodimer, may be a subunit of the RNA degradosome.</text>
</comment>
<comment type="subcellular location">
    <subcellularLocation>
        <location evidence="1">Cytoplasm</location>
    </subcellularLocation>
</comment>
<comment type="disruption phenotype">
    <text evidence="2">Not essential. Loss of 5'-processing of pre-5.8S rRNA, and the 2.6 kb rRNA which form the two 23S rRNA fragments. No removal of last 3 nucleotides at the 5' end during processing of 16S rRNA.</text>
</comment>
<comment type="similarity">
    <text evidence="1">Belongs to the metallo-beta-lactamase superfamily. RNA-metabolizing metallo-beta-lactamase-like family. Bacterial RNase J subfamily.</text>
</comment>
<gene>
    <name evidence="1" type="primary">rnj</name>
    <name type="ordered locus">SM2011_c01929</name>
</gene>
<evidence type="ECO:0000255" key="1">
    <source>
        <dbReference type="HAMAP-Rule" id="MF_01491"/>
    </source>
</evidence>
<evidence type="ECO:0000269" key="2">
    <source>
    </source>
</evidence>
<dbReference type="EC" id="3.1.-.-" evidence="1"/>
<dbReference type="EMBL" id="CP004140">
    <property type="protein sequence ID" value="AGG73861.1"/>
    <property type="molecule type" value="Genomic_DNA"/>
</dbReference>
<dbReference type="SMR" id="M4MR97"/>
<dbReference type="KEGG" id="smel:SM2011_c01929"/>
<dbReference type="PATRIC" id="fig|1286640.3.peg.4421"/>
<dbReference type="HOGENOM" id="CLU_008727_3_3_5"/>
<dbReference type="GO" id="GO:0005737">
    <property type="term" value="C:cytoplasm"/>
    <property type="evidence" value="ECO:0007669"/>
    <property type="project" value="UniProtKB-SubCell"/>
</dbReference>
<dbReference type="GO" id="GO:0004534">
    <property type="term" value="F:5'-3' RNA exonuclease activity"/>
    <property type="evidence" value="ECO:0007669"/>
    <property type="project" value="UniProtKB-UniRule"/>
</dbReference>
<dbReference type="GO" id="GO:0003723">
    <property type="term" value="F:RNA binding"/>
    <property type="evidence" value="ECO:0007669"/>
    <property type="project" value="UniProtKB-UniRule"/>
</dbReference>
<dbReference type="GO" id="GO:0004521">
    <property type="term" value="F:RNA endonuclease activity"/>
    <property type="evidence" value="ECO:0007669"/>
    <property type="project" value="UniProtKB-UniRule"/>
</dbReference>
<dbReference type="GO" id="GO:0008270">
    <property type="term" value="F:zinc ion binding"/>
    <property type="evidence" value="ECO:0007669"/>
    <property type="project" value="InterPro"/>
</dbReference>
<dbReference type="GO" id="GO:0006364">
    <property type="term" value="P:rRNA processing"/>
    <property type="evidence" value="ECO:0007669"/>
    <property type="project" value="UniProtKB-UniRule"/>
</dbReference>
<dbReference type="CDD" id="cd07714">
    <property type="entry name" value="RNaseJ_MBL-fold"/>
    <property type="match status" value="1"/>
</dbReference>
<dbReference type="Gene3D" id="3.10.20.580">
    <property type="match status" value="1"/>
</dbReference>
<dbReference type="Gene3D" id="3.40.50.10710">
    <property type="entry name" value="Metallo-hydrolase/oxidoreductase"/>
    <property type="match status" value="1"/>
</dbReference>
<dbReference type="Gene3D" id="3.60.15.10">
    <property type="entry name" value="Ribonuclease Z/Hydroxyacylglutathione hydrolase-like"/>
    <property type="match status" value="1"/>
</dbReference>
<dbReference type="HAMAP" id="MF_01491">
    <property type="entry name" value="RNase_J_bact"/>
    <property type="match status" value="1"/>
</dbReference>
<dbReference type="InterPro" id="IPR001279">
    <property type="entry name" value="Metallo-B-lactamas"/>
</dbReference>
<dbReference type="InterPro" id="IPR036866">
    <property type="entry name" value="RibonucZ/Hydroxyglut_hydro"/>
</dbReference>
<dbReference type="InterPro" id="IPR011108">
    <property type="entry name" value="RMMBL"/>
</dbReference>
<dbReference type="InterPro" id="IPR042173">
    <property type="entry name" value="RNase_J_2"/>
</dbReference>
<dbReference type="InterPro" id="IPR055132">
    <property type="entry name" value="RNase_J_b_CASP"/>
</dbReference>
<dbReference type="InterPro" id="IPR030854">
    <property type="entry name" value="RNase_J_bac"/>
</dbReference>
<dbReference type="InterPro" id="IPR041636">
    <property type="entry name" value="RNase_J_C"/>
</dbReference>
<dbReference type="PANTHER" id="PTHR43694">
    <property type="entry name" value="RIBONUCLEASE J"/>
    <property type="match status" value="1"/>
</dbReference>
<dbReference type="PANTHER" id="PTHR43694:SF1">
    <property type="entry name" value="RIBONUCLEASE J"/>
    <property type="match status" value="1"/>
</dbReference>
<dbReference type="Pfam" id="PF12706">
    <property type="entry name" value="Lactamase_B_2"/>
    <property type="match status" value="1"/>
</dbReference>
<dbReference type="Pfam" id="PF07521">
    <property type="entry name" value="RMMBL"/>
    <property type="match status" value="1"/>
</dbReference>
<dbReference type="Pfam" id="PF22505">
    <property type="entry name" value="RNase_J_b_CASP"/>
    <property type="match status" value="1"/>
</dbReference>
<dbReference type="Pfam" id="PF17770">
    <property type="entry name" value="RNase_J_C"/>
    <property type="match status" value="1"/>
</dbReference>
<dbReference type="SMART" id="SM00849">
    <property type="entry name" value="Lactamase_B"/>
    <property type="match status" value="1"/>
</dbReference>
<dbReference type="SUPFAM" id="SSF56281">
    <property type="entry name" value="Metallo-hydrolase/oxidoreductase"/>
    <property type="match status" value="1"/>
</dbReference>
<dbReference type="PROSITE" id="PS00307">
    <property type="entry name" value="LECTIN_LEGUME_BETA"/>
    <property type="match status" value="1"/>
</dbReference>
<proteinExistence type="inferred from homology"/>
<sequence>MKKAKAHHDMAQDEELVFLPLGGVGEIGMNLGLYGYGRPGHRQWIMVDCGVTFPGPELPGVDLVLPDIAFLAEQRRNLKAIIITHAHEDHYGALNDLWPGLNVPVYASPFTAGMLEAKRAFEKSRSEIPITIFKQGDRINVGPFSVEAVGVNHSIPEPMALVIRTQLGTVVHTGDWKIDLEPSLGPLTDESRFRQIGEEGVLALVCDSTNALREGVSPSERQVSESLAKIIADAEGRVGITTFSSNVGRIRSVAEAAEAAGREVLLLGSSMKRVVDVARDVGLMEGVKPFLAEDEFGYIPRDKVVVILTGSQGEPRAALAKIARDEMRNVAFSAGDTIVFSSRTIPGNEKAINDIKNGLIEQGIHIITDSEALVHVSGHPRRTELQQMYQWVKPQILVPVHGEAAHLTAHAELGLQSGIPSVPRLRNGEMLRLAPGPAEVIDEAPHGRIYKDGTLIGDFEEMGIGERRKLSFAGHVSVSVVLDSRYDFLGDPDVVPIGLPEFDDEGEAMEDTLYDAVLGAVESIPRAKRKDLAMLQEAVRRAVRSTTNQVWGKKPVVTVFITKV</sequence>
<organism>
    <name type="scientific">Sinorhizobium meliloti (strain Sm2011 / Rm2011 / 2011)</name>
    <dbReference type="NCBI Taxonomy" id="1286640"/>
    <lineage>
        <taxon>Bacteria</taxon>
        <taxon>Pseudomonadati</taxon>
        <taxon>Pseudomonadota</taxon>
        <taxon>Alphaproteobacteria</taxon>
        <taxon>Hyphomicrobiales</taxon>
        <taxon>Rhizobiaceae</taxon>
        <taxon>Sinorhizobium/Ensifer group</taxon>
        <taxon>Sinorhizobium</taxon>
    </lineage>
</organism>
<keyword id="KW-0963">Cytoplasm</keyword>
<keyword id="KW-0255">Endonuclease</keyword>
<keyword id="KW-0269">Exonuclease</keyword>
<keyword id="KW-0378">Hydrolase</keyword>
<keyword id="KW-0479">Metal-binding</keyword>
<keyword id="KW-0540">Nuclease</keyword>
<keyword id="KW-0694">RNA-binding</keyword>
<keyword id="KW-0698">rRNA processing</keyword>
<keyword id="KW-0862">Zinc</keyword>
<accession>M4MR97</accession>
<reference key="1">
    <citation type="journal article" date="2013" name="DNA Res.">
        <title>Next-generation annotation of prokaryotic genomes with EuGene-P: application to Sinorhizobium meliloti 2011.</title>
        <authorList>
            <person name="Sallet E."/>
            <person name="Roux B."/>
            <person name="Sauviac L."/>
            <person name="Jardinaud M.F."/>
            <person name="Carrere S."/>
            <person name="Faraut T."/>
            <person name="de Carvalho-Niebel F."/>
            <person name="Gouzy J."/>
            <person name="Gamas P."/>
            <person name="Capela D."/>
            <person name="Bruand C."/>
            <person name="Schiex T."/>
        </authorList>
    </citation>
    <scope>NUCLEOTIDE SEQUENCE [LARGE SCALE GENOMIC DNA]</scope>
    <source>
        <strain>Sm2011 / Rm2011 / 2011</strain>
    </source>
</reference>
<reference key="2">
    <citation type="journal article" date="2009" name="FEBS Lett.">
        <title>RNase J is involved in the 5'-end maturation of 16S rRNA and 23S rRNA in Sinorhizobium meliloti.</title>
        <authorList>
            <person name="Madhugiri R."/>
            <person name="Evguenieva-Hackenberg E."/>
        </authorList>
    </citation>
    <scope>FUNCTION</scope>
    <scope>DISRUPTION PHENOTYPE</scope>
    <source>
        <strain>Sm2011 / Rm2011 / 2011</strain>
    </source>
</reference>
<protein>
    <recommendedName>
        <fullName evidence="1">Ribonuclease J</fullName>
        <shortName evidence="1">RNase J</shortName>
        <ecNumber evidence="1">3.1.-.-</ecNumber>
    </recommendedName>
</protein>
<name>RNJ_SINM2</name>